<dbReference type="EC" id="2.7.11.1" evidence="1"/>
<dbReference type="EMBL" id="DS027685">
    <property type="protein sequence ID" value="EAW25221.1"/>
    <property type="molecule type" value="Genomic_DNA"/>
</dbReference>
<dbReference type="RefSeq" id="XP_001267118.1">
    <property type="nucleotide sequence ID" value="XM_001267117.1"/>
</dbReference>
<dbReference type="SMR" id="A1CX69"/>
<dbReference type="STRING" id="331117.A1CX69"/>
<dbReference type="EnsemblFungi" id="EAW25221">
    <property type="protein sequence ID" value="EAW25221"/>
    <property type="gene ID" value="NFIA_107120"/>
</dbReference>
<dbReference type="GeneID" id="4593469"/>
<dbReference type="KEGG" id="nfi:NFIA_107120"/>
<dbReference type="VEuPathDB" id="FungiDB:NFIA_107120"/>
<dbReference type="eggNOG" id="KOG0595">
    <property type="taxonomic scope" value="Eukaryota"/>
</dbReference>
<dbReference type="HOGENOM" id="CLU_006447_0_0_1"/>
<dbReference type="OMA" id="INNVVQW"/>
<dbReference type="OrthoDB" id="346907at2759"/>
<dbReference type="Proteomes" id="UP000006702">
    <property type="component" value="Unassembled WGS sequence"/>
</dbReference>
<dbReference type="GO" id="GO:1990316">
    <property type="term" value="C:Atg1/ULK1 kinase complex"/>
    <property type="evidence" value="ECO:0007669"/>
    <property type="project" value="EnsemblFungi"/>
</dbReference>
<dbReference type="GO" id="GO:0000421">
    <property type="term" value="C:autophagosome membrane"/>
    <property type="evidence" value="ECO:0007669"/>
    <property type="project" value="EnsemblFungi"/>
</dbReference>
<dbReference type="GO" id="GO:0005829">
    <property type="term" value="C:cytosol"/>
    <property type="evidence" value="ECO:0007669"/>
    <property type="project" value="EnsemblFungi"/>
</dbReference>
<dbReference type="GO" id="GO:0061908">
    <property type="term" value="C:phagophore"/>
    <property type="evidence" value="ECO:0007669"/>
    <property type="project" value="EnsemblFungi"/>
</dbReference>
<dbReference type="GO" id="GO:0034045">
    <property type="term" value="C:phagophore assembly site membrane"/>
    <property type="evidence" value="ECO:0007669"/>
    <property type="project" value="UniProtKB-SubCell"/>
</dbReference>
<dbReference type="GO" id="GO:0120095">
    <property type="term" value="C:vacuole-isolation membrane contact site"/>
    <property type="evidence" value="ECO:0007669"/>
    <property type="project" value="EnsemblFungi"/>
</dbReference>
<dbReference type="GO" id="GO:0005524">
    <property type="term" value="F:ATP binding"/>
    <property type="evidence" value="ECO:0007669"/>
    <property type="project" value="UniProtKB-KW"/>
</dbReference>
<dbReference type="GO" id="GO:0106310">
    <property type="term" value="F:protein serine kinase activity"/>
    <property type="evidence" value="ECO:0007669"/>
    <property type="project" value="RHEA"/>
</dbReference>
<dbReference type="GO" id="GO:0004674">
    <property type="term" value="F:protein serine/threonine kinase activity"/>
    <property type="evidence" value="ECO:0007669"/>
    <property type="project" value="UniProtKB-KW"/>
</dbReference>
<dbReference type="GO" id="GO:0000422">
    <property type="term" value="P:autophagy of mitochondrion"/>
    <property type="evidence" value="ECO:0007669"/>
    <property type="project" value="EnsemblFungi"/>
</dbReference>
<dbReference type="GO" id="GO:0006995">
    <property type="term" value="P:cellular response to nitrogen starvation"/>
    <property type="evidence" value="ECO:0007669"/>
    <property type="project" value="EnsemblFungi"/>
</dbReference>
<dbReference type="GO" id="GO:0051365">
    <property type="term" value="P:cellular response to potassium ion starvation"/>
    <property type="evidence" value="ECO:0007669"/>
    <property type="project" value="EnsemblFungi"/>
</dbReference>
<dbReference type="GO" id="GO:0034727">
    <property type="term" value="P:piecemeal microautophagy of the nucleus"/>
    <property type="evidence" value="ECO:0007669"/>
    <property type="project" value="EnsemblFungi"/>
</dbReference>
<dbReference type="GO" id="GO:0034497">
    <property type="term" value="P:protein localization to phagophore assembly site"/>
    <property type="evidence" value="ECO:0007669"/>
    <property type="project" value="EnsemblFungi"/>
</dbReference>
<dbReference type="GO" id="GO:0015031">
    <property type="term" value="P:protein transport"/>
    <property type="evidence" value="ECO:0007669"/>
    <property type="project" value="UniProtKB-KW"/>
</dbReference>
<dbReference type="GO" id="GO:0010506">
    <property type="term" value="P:regulation of autophagy"/>
    <property type="evidence" value="ECO:0007669"/>
    <property type="project" value="InterPro"/>
</dbReference>
<dbReference type="GO" id="GO:0061709">
    <property type="term" value="P:reticulophagy"/>
    <property type="evidence" value="ECO:0007669"/>
    <property type="project" value="EnsemblFungi"/>
</dbReference>
<dbReference type="CDD" id="cd14009">
    <property type="entry name" value="STKc_ATG1_ULK_like"/>
    <property type="match status" value="1"/>
</dbReference>
<dbReference type="FunFam" id="1.10.510.10:FF:000817">
    <property type="entry name" value="Serine/threonine-protein kinase ATG1"/>
    <property type="match status" value="1"/>
</dbReference>
<dbReference type="FunFam" id="3.30.200.20:FF:000399">
    <property type="entry name" value="Serine/threonine-protein kinase atg1"/>
    <property type="match status" value="1"/>
</dbReference>
<dbReference type="Gene3D" id="3.30.200.20">
    <property type="entry name" value="Phosphorylase Kinase, domain 1"/>
    <property type="match status" value="1"/>
</dbReference>
<dbReference type="Gene3D" id="1.10.510.10">
    <property type="entry name" value="Transferase(Phosphotransferase) domain 1"/>
    <property type="match status" value="1"/>
</dbReference>
<dbReference type="InterPro" id="IPR045269">
    <property type="entry name" value="Atg1-like"/>
</dbReference>
<dbReference type="InterPro" id="IPR048941">
    <property type="entry name" value="ATG1-like_MIT2"/>
</dbReference>
<dbReference type="InterPro" id="IPR022708">
    <property type="entry name" value="Atg1-like_tMIT"/>
</dbReference>
<dbReference type="InterPro" id="IPR011009">
    <property type="entry name" value="Kinase-like_dom_sf"/>
</dbReference>
<dbReference type="InterPro" id="IPR000719">
    <property type="entry name" value="Prot_kinase_dom"/>
</dbReference>
<dbReference type="InterPro" id="IPR017441">
    <property type="entry name" value="Protein_kinase_ATP_BS"/>
</dbReference>
<dbReference type="InterPro" id="IPR008271">
    <property type="entry name" value="Ser/Thr_kinase_AS"/>
</dbReference>
<dbReference type="PANTHER" id="PTHR24348:SF22">
    <property type="entry name" value="NON-SPECIFIC SERINE_THREONINE PROTEIN KINASE"/>
    <property type="match status" value="1"/>
</dbReference>
<dbReference type="PANTHER" id="PTHR24348">
    <property type="entry name" value="SERINE/THREONINE-PROTEIN KINASE UNC-51-RELATED"/>
    <property type="match status" value="1"/>
</dbReference>
<dbReference type="Pfam" id="PF12063">
    <property type="entry name" value="ATG1-like_MIT1"/>
    <property type="match status" value="1"/>
</dbReference>
<dbReference type="Pfam" id="PF21127">
    <property type="entry name" value="ATG1-like_MIT2"/>
    <property type="match status" value="1"/>
</dbReference>
<dbReference type="Pfam" id="PF00069">
    <property type="entry name" value="Pkinase"/>
    <property type="match status" value="1"/>
</dbReference>
<dbReference type="SMART" id="SM00220">
    <property type="entry name" value="S_TKc"/>
    <property type="match status" value="1"/>
</dbReference>
<dbReference type="SUPFAM" id="SSF56112">
    <property type="entry name" value="Protein kinase-like (PK-like)"/>
    <property type="match status" value="1"/>
</dbReference>
<dbReference type="PROSITE" id="PS00107">
    <property type="entry name" value="PROTEIN_KINASE_ATP"/>
    <property type="match status" value="1"/>
</dbReference>
<dbReference type="PROSITE" id="PS50011">
    <property type="entry name" value="PROTEIN_KINASE_DOM"/>
    <property type="match status" value="1"/>
</dbReference>
<dbReference type="PROSITE" id="PS00108">
    <property type="entry name" value="PROTEIN_KINASE_ST"/>
    <property type="match status" value="1"/>
</dbReference>
<keyword id="KW-0067">ATP-binding</keyword>
<keyword id="KW-0072">Autophagy</keyword>
<keyword id="KW-0963">Cytoplasm</keyword>
<keyword id="KW-0418">Kinase</keyword>
<keyword id="KW-0472">Membrane</keyword>
<keyword id="KW-0547">Nucleotide-binding</keyword>
<keyword id="KW-0653">Protein transport</keyword>
<keyword id="KW-1185">Reference proteome</keyword>
<keyword id="KW-0723">Serine/threonine-protein kinase</keyword>
<keyword id="KW-0808">Transferase</keyword>
<keyword id="KW-0813">Transport</keyword>
<comment type="function">
    <text evidence="1">Serine/threonine protein kinase involved in the cytoplasm to vacuole transport (Cvt) and found to be essential in autophagy, where it is required for the formation of autophagosomes. Involved in the clearance of protein aggregates which cannot be efficiently cleared by the proteasome. Required for selective autophagic degradation of the nucleus (nucleophagy) as well as for mitophagy which contributes to regulate mitochondrial quantity and quality by eliminating the mitochondria to a basal level to fulfill cellular energy requirements and preventing excess ROS production. Also involved in endoplasmic reticulum-specific autophagic process, in selective removal of ER-associated degradation (ERAD) substrates. Plays a key role in ATG9 and ATG23 cycling through the pre-autophagosomal structure and is necessary to promote ATG18 binding to ATG9 through phosphorylation of ATG9. Catalyzes phosphorylation of ATG4, decreasing the interaction between ATG4 and ATG8 and impairing deconjugation of PE-conjugated forms of ATG8.</text>
</comment>
<comment type="catalytic activity">
    <reaction evidence="1">
        <text>L-seryl-[protein] + ATP = O-phospho-L-seryl-[protein] + ADP + H(+)</text>
        <dbReference type="Rhea" id="RHEA:17989"/>
        <dbReference type="Rhea" id="RHEA-COMP:9863"/>
        <dbReference type="Rhea" id="RHEA-COMP:11604"/>
        <dbReference type="ChEBI" id="CHEBI:15378"/>
        <dbReference type="ChEBI" id="CHEBI:29999"/>
        <dbReference type="ChEBI" id="CHEBI:30616"/>
        <dbReference type="ChEBI" id="CHEBI:83421"/>
        <dbReference type="ChEBI" id="CHEBI:456216"/>
        <dbReference type="EC" id="2.7.11.1"/>
    </reaction>
</comment>
<comment type="catalytic activity">
    <reaction evidence="1">
        <text>L-threonyl-[protein] + ATP = O-phospho-L-threonyl-[protein] + ADP + H(+)</text>
        <dbReference type="Rhea" id="RHEA:46608"/>
        <dbReference type="Rhea" id="RHEA-COMP:11060"/>
        <dbReference type="Rhea" id="RHEA-COMP:11605"/>
        <dbReference type="ChEBI" id="CHEBI:15378"/>
        <dbReference type="ChEBI" id="CHEBI:30013"/>
        <dbReference type="ChEBI" id="CHEBI:30616"/>
        <dbReference type="ChEBI" id="CHEBI:61977"/>
        <dbReference type="ChEBI" id="CHEBI:456216"/>
        <dbReference type="EC" id="2.7.11.1"/>
    </reaction>
</comment>
<comment type="subunit">
    <text evidence="1">Homodimer. Forms a ternary complex with ATG13 and ATG17.</text>
</comment>
<comment type="subcellular location">
    <subcellularLocation>
        <location evidence="1">Cytoplasm</location>
    </subcellularLocation>
    <subcellularLocation>
        <location evidence="1">Preautophagosomal structure membrane</location>
        <topology evidence="1">Peripheral membrane protein</topology>
    </subcellularLocation>
</comment>
<comment type="similarity">
    <text evidence="2">Belongs to the protein kinase superfamily. Ser/Thr protein kinase family. APG1/unc-51/ULK1 subfamily.</text>
</comment>
<proteinExistence type="inferred from homology"/>
<gene>
    <name evidence="1" type="primary">atg1</name>
    <name evidence="5" type="ORF">NFIA_107120</name>
</gene>
<reference key="1">
    <citation type="journal article" date="2008" name="PLoS Genet.">
        <title>Genomic islands in the pathogenic filamentous fungus Aspergillus fumigatus.</title>
        <authorList>
            <person name="Fedorova N.D."/>
            <person name="Khaldi N."/>
            <person name="Joardar V.S."/>
            <person name="Maiti R."/>
            <person name="Amedeo P."/>
            <person name="Anderson M.J."/>
            <person name="Crabtree J."/>
            <person name="Silva J.C."/>
            <person name="Badger J.H."/>
            <person name="Albarraq A."/>
            <person name="Angiuoli S."/>
            <person name="Bussey H."/>
            <person name="Bowyer P."/>
            <person name="Cotty P.J."/>
            <person name="Dyer P.S."/>
            <person name="Egan A."/>
            <person name="Galens K."/>
            <person name="Fraser-Liggett C.M."/>
            <person name="Haas B.J."/>
            <person name="Inman J.M."/>
            <person name="Kent R."/>
            <person name="Lemieux S."/>
            <person name="Malavazi I."/>
            <person name="Orvis J."/>
            <person name="Roemer T."/>
            <person name="Ronning C.M."/>
            <person name="Sundaram J.P."/>
            <person name="Sutton G."/>
            <person name="Turner G."/>
            <person name="Venter J.C."/>
            <person name="White O.R."/>
            <person name="Whitty B.R."/>
            <person name="Youngman P."/>
            <person name="Wolfe K.H."/>
            <person name="Goldman G.H."/>
            <person name="Wortman J.R."/>
            <person name="Jiang B."/>
            <person name="Denning D.W."/>
            <person name="Nierman W.C."/>
        </authorList>
    </citation>
    <scope>NUCLEOTIDE SEQUENCE [LARGE SCALE GENOMIC DNA]</scope>
    <source>
        <strain>ATCC 1020 / DSM 3700 / CBS 544.65 / FGSC A1164 / JCM 1740 / NRRL 181 / WB 181</strain>
    </source>
</reference>
<feature type="chain" id="PRO_0000317794" description="Serine/threonine-protein kinase atg1">
    <location>
        <begin position="1"/>
        <end position="950"/>
    </location>
</feature>
<feature type="domain" description="Protein kinase" evidence="2">
    <location>
        <begin position="6"/>
        <end position="311"/>
    </location>
</feature>
<feature type="region of interest" description="Disordered" evidence="4">
    <location>
        <begin position="314"/>
        <end position="425"/>
    </location>
</feature>
<feature type="region of interest" description="Disordered" evidence="4">
    <location>
        <begin position="443"/>
        <end position="467"/>
    </location>
</feature>
<feature type="region of interest" description="Disordered" evidence="4">
    <location>
        <begin position="505"/>
        <end position="570"/>
    </location>
</feature>
<feature type="region of interest" description="Disordered" evidence="4">
    <location>
        <begin position="671"/>
        <end position="690"/>
    </location>
</feature>
<feature type="region of interest" description="Disordered" evidence="4">
    <location>
        <begin position="926"/>
        <end position="950"/>
    </location>
</feature>
<feature type="compositionally biased region" description="Polar residues" evidence="4">
    <location>
        <begin position="370"/>
        <end position="389"/>
    </location>
</feature>
<feature type="compositionally biased region" description="Polar residues" evidence="4">
    <location>
        <begin position="447"/>
        <end position="458"/>
    </location>
</feature>
<feature type="compositionally biased region" description="Polar residues" evidence="4">
    <location>
        <begin position="511"/>
        <end position="520"/>
    </location>
</feature>
<feature type="compositionally biased region" description="Basic and acidic residues" evidence="4">
    <location>
        <begin position="549"/>
        <end position="565"/>
    </location>
</feature>
<feature type="active site" description="Proton acceptor" evidence="2 3">
    <location>
        <position position="149"/>
    </location>
</feature>
<feature type="binding site" evidence="2">
    <location>
        <begin position="12"/>
        <end position="20"/>
    </location>
    <ligand>
        <name>ATP</name>
        <dbReference type="ChEBI" id="CHEBI:30616"/>
    </ligand>
</feature>
<feature type="binding site" evidence="2">
    <location>
        <position position="35"/>
    </location>
    <ligand>
        <name>ATP</name>
        <dbReference type="ChEBI" id="CHEBI:30616"/>
    </ligand>
</feature>
<evidence type="ECO:0000250" key="1">
    <source>
        <dbReference type="UniProtKB" id="P53104"/>
    </source>
</evidence>
<evidence type="ECO:0000255" key="2">
    <source>
        <dbReference type="PROSITE-ProRule" id="PRU00159"/>
    </source>
</evidence>
<evidence type="ECO:0000255" key="3">
    <source>
        <dbReference type="PROSITE-ProRule" id="PRU10027"/>
    </source>
</evidence>
<evidence type="ECO:0000256" key="4">
    <source>
        <dbReference type="SAM" id="MobiDB-lite"/>
    </source>
</evidence>
<evidence type="ECO:0000303" key="5">
    <source>
    </source>
</evidence>
<name>ATG1_NEOFI</name>
<protein>
    <recommendedName>
        <fullName evidence="1">Serine/threonine-protein kinase atg1</fullName>
        <ecNumber evidence="1">2.7.11.1</ecNumber>
    </recommendedName>
    <alternativeName>
        <fullName evidence="1">Autophagy-related protein 1</fullName>
    </alternativeName>
</protein>
<sequence>MSIGRYTRLDEIGRGSFATVYQGVHTKTRTYVAIKSVNLSKLNKKLKDNLSSEIHILKGLYHPHIVALIDCHETTSHIHLVMEYCALGDLSLFIKRRDTLGDHRYTRDMIAKYPNPPGGALNEVVVRHFLKQLASALKFLRDRNLIHRDIKPQNLLLCPSPSSYRSGVTQVVPFKGSEDSFNPATGLESLPLLKIADFGFARSLPATSLAETLCGSPLYMAPEILRYEKYDAKADLWSVGTVLYEMVVGKPPFRATNHVELLRKIEKGEDRIKFPEENPASDEIKALIRALLKRNPVERLNFPDFFENGVITSPIPGLVADDQPSIPRDPPADPETAESTPRPDSRSGAIVPGGTEREREVSYLPKGDTGLTQRPPSQNQRFGTPPTTTHMRRIGSGDRPPSTPKELTPPMTYPQRPSAVSHATAPGRQELVDRNAAFTAMERQRGRNTFSEGSPQTDRQADKLREERERAAQDVAFERDYVVVEKRAVEVNAFADELAHSPRIQGGISRGAQTGALSRRSTVHGPTPLNPSPPQATVGKAMQVLSGRSRADSMHNRQSSYERRYGQSPTSATSAISKALNMASGRLFGMGFSPPLAITKGGRSPPLAYNPFPAYPAHGSLMIGDGAKNNVALDEDTKTVQILEECATRSDVVYGFAEVKYKQLVPLAPSVQTDPSSKGNLAGERENPDSADGGLTVDAIVTLSEEALVLYVKALSLLAKSMDIAGAWWARKNRGDGFGDSAMSRADGASTLAGTRINNVVQWVRNRFNEVLEKGEFVRLKLIEAQKRLPPDHPSHPDNHSVGSSLGSGASVDVVVSPGVSAEKLMYDRALEMSRTAAINELTGEDLSGCEIAYVTAIRMLEAVLENGEVPRFGQGKDDTSKDSDKIVLDAVQAEERQVVIKLVSSIRSRLAALRKKLAILAKRAPTPSANVPSKMAPLNPVSVGATPPK</sequence>
<accession>A1CX69</accession>
<organism>
    <name type="scientific">Neosartorya fischeri (strain ATCC 1020 / DSM 3700 / CBS 544.65 / FGSC A1164 / JCM 1740 / NRRL 181 / WB 181)</name>
    <name type="common">Aspergillus fischerianus</name>
    <dbReference type="NCBI Taxonomy" id="331117"/>
    <lineage>
        <taxon>Eukaryota</taxon>
        <taxon>Fungi</taxon>
        <taxon>Dikarya</taxon>
        <taxon>Ascomycota</taxon>
        <taxon>Pezizomycotina</taxon>
        <taxon>Eurotiomycetes</taxon>
        <taxon>Eurotiomycetidae</taxon>
        <taxon>Eurotiales</taxon>
        <taxon>Aspergillaceae</taxon>
        <taxon>Aspergillus</taxon>
        <taxon>Aspergillus subgen. Fumigati</taxon>
    </lineage>
</organism>